<keyword id="KW-1185">Reference proteome</keyword>
<keyword id="KW-0687">Ribonucleoprotein</keyword>
<keyword id="KW-0689">Ribosomal protein</keyword>
<keyword id="KW-0694">RNA-binding</keyword>
<keyword id="KW-0699">rRNA-binding</keyword>
<protein>
    <recommendedName>
        <fullName evidence="1">Large ribosomal subunit protein uL10</fullName>
    </recommendedName>
    <alternativeName>
        <fullName evidence="2">50S ribosomal protein L10</fullName>
    </alternativeName>
</protein>
<organism>
    <name type="scientific">Natranaerobius thermophilus (strain ATCC BAA-1301 / DSM 18059 / JW/NM-WN-LF)</name>
    <dbReference type="NCBI Taxonomy" id="457570"/>
    <lineage>
        <taxon>Bacteria</taxon>
        <taxon>Bacillati</taxon>
        <taxon>Bacillota</taxon>
        <taxon>Clostridia</taxon>
        <taxon>Natranaerobiales</taxon>
        <taxon>Natranaerobiaceae</taxon>
        <taxon>Natranaerobius</taxon>
    </lineage>
</organism>
<reference key="1">
    <citation type="submission" date="2008-04" db="EMBL/GenBank/DDBJ databases">
        <title>Complete sequence of chromosome of Natranaerobius thermophilus JW/NM-WN-LF.</title>
        <authorList>
            <consortium name="US DOE Joint Genome Institute"/>
            <person name="Copeland A."/>
            <person name="Lucas S."/>
            <person name="Lapidus A."/>
            <person name="Glavina del Rio T."/>
            <person name="Dalin E."/>
            <person name="Tice H."/>
            <person name="Bruce D."/>
            <person name="Goodwin L."/>
            <person name="Pitluck S."/>
            <person name="Chertkov O."/>
            <person name="Brettin T."/>
            <person name="Detter J.C."/>
            <person name="Han C."/>
            <person name="Kuske C.R."/>
            <person name="Schmutz J."/>
            <person name="Larimer F."/>
            <person name="Land M."/>
            <person name="Hauser L."/>
            <person name="Kyrpides N."/>
            <person name="Lykidis A."/>
            <person name="Mesbah N.M."/>
            <person name="Wiegel J."/>
        </authorList>
    </citation>
    <scope>NUCLEOTIDE SEQUENCE [LARGE SCALE GENOMIC DNA]</scope>
    <source>
        <strain>ATCC BAA-1301 / DSM 18059 / JW/NM-WN-LF</strain>
    </source>
</reference>
<gene>
    <name evidence="1" type="primary">rplJ</name>
    <name type="ordered locus">Nther_0183</name>
</gene>
<accession>B2A4C8</accession>
<sequence length="176" mass="19351">MKKTRQEKERMVEELTEKLSQAESAVLVDYRGLDVAQMNELRRQLGDSNVDFKVVKNTLTSIAAENAGIDEINQYLEGPVGIAFGYDDPVVPAKILNDFSKENEELEFKAAILGESVVGEEKVKNLAKLPSREELLGKVAGTFQAPIAGFAGACQGIIRKFVYAVDAVRQEKEDAS</sequence>
<feature type="chain" id="PRO_1000120990" description="Large ribosomal subunit protein uL10">
    <location>
        <begin position="1"/>
        <end position="176"/>
    </location>
</feature>
<evidence type="ECO:0000255" key="1">
    <source>
        <dbReference type="HAMAP-Rule" id="MF_00362"/>
    </source>
</evidence>
<evidence type="ECO:0000305" key="2"/>
<name>RL10_NATTJ</name>
<proteinExistence type="inferred from homology"/>
<dbReference type="EMBL" id="CP001034">
    <property type="protein sequence ID" value="ACB83782.1"/>
    <property type="molecule type" value="Genomic_DNA"/>
</dbReference>
<dbReference type="SMR" id="B2A4C8"/>
<dbReference type="FunCoup" id="B2A4C8">
    <property type="interactions" value="450"/>
</dbReference>
<dbReference type="STRING" id="457570.Nther_0183"/>
<dbReference type="KEGG" id="nth:Nther_0183"/>
<dbReference type="eggNOG" id="COG0244">
    <property type="taxonomic scope" value="Bacteria"/>
</dbReference>
<dbReference type="HOGENOM" id="CLU_092227_2_0_9"/>
<dbReference type="InParanoid" id="B2A4C8"/>
<dbReference type="OrthoDB" id="9808307at2"/>
<dbReference type="Proteomes" id="UP000001683">
    <property type="component" value="Chromosome"/>
</dbReference>
<dbReference type="GO" id="GO:0015934">
    <property type="term" value="C:large ribosomal subunit"/>
    <property type="evidence" value="ECO:0007669"/>
    <property type="project" value="InterPro"/>
</dbReference>
<dbReference type="GO" id="GO:0070180">
    <property type="term" value="F:large ribosomal subunit rRNA binding"/>
    <property type="evidence" value="ECO:0007669"/>
    <property type="project" value="UniProtKB-UniRule"/>
</dbReference>
<dbReference type="GO" id="GO:0003735">
    <property type="term" value="F:structural constituent of ribosome"/>
    <property type="evidence" value="ECO:0007669"/>
    <property type="project" value="InterPro"/>
</dbReference>
<dbReference type="GO" id="GO:0006412">
    <property type="term" value="P:translation"/>
    <property type="evidence" value="ECO:0007669"/>
    <property type="project" value="UniProtKB-UniRule"/>
</dbReference>
<dbReference type="CDD" id="cd05797">
    <property type="entry name" value="Ribosomal_L10"/>
    <property type="match status" value="1"/>
</dbReference>
<dbReference type="Gene3D" id="3.30.70.1730">
    <property type="match status" value="1"/>
</dbReference>
<dbReference type="Gene3D" id="6.10.250.290">
    <property type="match status" value="1"/>
</dbReference>
<dbReference type="HAMAP" id="MF_00362">
    <property type="entry name" value="Ribosomal_uL10"/>
    <property type="match status" value="1"/>
</dbReference>
<dbReference type="InterPro" id="IPR001790">
    <property type="entry name" value="Ribosomal_uL10"/>
</dbReference>
<dbReference type="InterPro" id="IPR043141">
    <property type="entry name" value="Ribosomal_uL10-like_sf"/>
</dbReference>
<dbReference type="InterPro" id="IPR022973">
    <property type="entry name" value="Ribosomal_uL10_bac"/>
</dbReference>
<dbReference type="InterPro" id="IPR047865">
    <property type="entry name" value="Ribosomal_uL10_bac_type"/>
</dbReference>
<dbReference type="InterPro" id="IPR002363">
    <property type="entry name" value="Ribosomal_uL10_CS_bac"/>
</dbReference>
<dbReference type="NCBIfam" id="NF000955">
    <property type="entry name" value="PRK00099.1-1"/>
    <property type="match status" value="1"/>
</dbReference>
<dbReference type="PANTHER" id="PTHR11560">
    <property type="entry name" value="39S RIBOSOMAL PROTEIN L10, MITOCHONDRIAL"/>
    <property type="match status" value="1"/>
</dbReference>
<dbReference type="Pfam" id="PF00466">
    <property type="entry name" value="Ribosomal_L10"/>
    <property type="match status" value="1"/>
</dbReference>
<dbReference type="SUPFAM" id="SSF160369">
    <property type="entry name" value="Ribosomal protein L10-like"/>
    <property type="match status" value="1"/>
</dbReference>
<dbReference type="PROSITE" id="PS01109">
    <property type="entry name" value="RIBOSOMAL_L10"/>
    <property type="match status" value="1"/>
</dbReference>
<comment type="function">
    <text evidence="1">Forms part of the ribosomal stalk, playing a central role in the interaction of the ribosome with GTP-bound translation factors.</text>
</comment>
<comment type="subunit">
    <text evidence="1">Part of the ribosomal stalk of the 50S ribosomal subunit. The N-terminus interacts with L11 and the large rRNA to form the base of the stalk. The C-terminus forms an elongated spine to which L12 dimers bind in a sequential fashion forming a multimeric L10(L12)X complex.</text>
</comment>
<comment type="similarity">
    <text evidence="1">Belongs to the universal ribosomal protein uL10 family.</text>
</comment>